<sequence>MAPVSGSRSPDREASGSGGRRRSSSKSPKPSKSARSPRGRRSRSHSCSRSGDRNGLTHQLGGLSQGSRNQSYRSRSRSRSRERPSAPRGIPFASASSSVYYGSYSRPYGSDKPWPSLLDKEREESLRQKRLSERERIGELGAPEVWGLSPKNPEPDSDEHTPVEDEEPKKSTTSASTSEEEKKKKSSRSKERSKKRRKKKSSKRKHKKYSEDSDSDSDSETDSSDEDNKRRAKKAKKKEKKKKHRSKKYKKKRSKKSRKESSDSSSKESQEEFLENPWKDRTKAEEPSDLIGPEAPKTLTSQDDKPLNYGHALLPGEGAAMAEYVKAGKRIPRRGEIGLTSEEIASFECSGYVMSGSRHRRMEAVRLRKENQIYSADEKRALASFNQEERRKRENKILASFREMVYRKTKGKDDK</sequence>
<reference key="1">
    <citation type="journal article" date="2003" name="Biochem. Biophys. Res. Commun.">
        <title>Identification of a nuclear protein that promotes NF-kappaB activation.</title>
        <authorList>
            <person name="Chen D."/>
            <person name="Li Z."/>
            <person name="Yang Q."/>
            <person name="Zhang J."/>
            <person name="Zhai Z."/>
            <person name="Shu H.-B."/>
        </authorList>
    </citation>
    <scope>NUCLEOTIDE SEQUENCE [MRNA]</scope>
    <scope>FUNCTION</scope>
    <scope>SUBCELLULAR LOCATION</scope>
    <source>
        <tissue>B-cell</tissue>
    </source>
</reference>
<reference key="2">
    <citation type="journal article" date="2004" name="Nat. Genet.">
        <title>Complete sequencing and characterization of 21,243 full-length human cDNAs.</title>
        <authorList>
            <person name="Ota T."/>
            <person name="Suzuki Y."/>
            <person name="Nishikawa T."/>
            <person name="Otsuki T."/>
            <person name="Sugiyama T."/>
            <person name="Irie R."/>
            <person name="Wakamatsu A."/>
            <person name="Hayashi K."/>
            <person name="Sato H."/>
            <person name="Nagai K."/>
            <person name="Kimura K."/>
            <person name="Makita H."/>
            <person name="Sekine M."/>
            <person name="Obayashi M."/>
            <person name="Nishi T."/>
            <person name="Shibahara T."/>
            <person name="Tanaka T."/>
            <person name="Ishii S."/>
            <person name="Yamamoto J."/>
            <person name="Saito K."/>
            <person name="Kawai Y."/>
            <person name="Isono Y."/>
            <person name="Nakamura Y."/>
            <person name="Nagahari K."/>
            <person name="Murakami K."/>
            <person name="Yasuda T."/>
            <person name="Iwayanagi T."/>
            <person name="Wagatsuma M."/>
            <person name="Shiratori A."/>
            <person name="Sudo H."/>
            <person name="Hosoiri T."/>
            <person name="Kaku Y."/>
            <person name="Kodaira H."/>
            <person name="Kondo H."/>
            <person name="Sugawara M."/>
            <person name="Takahashi M."/>
            <person name="Kanda K."/>
            <person name="Yokoi T."/>
            <person name="Furuya T."/>
            <person name="Kikkawa E."/>
            <person name="Omura Y."/>
            <person name="Abe K."/>
            <person name="Kamihara K."/>
            <person name="Katsuta N."/>
            <person name="Sato K."/>
            <person name="Tanikawa M."/>
            <person name="Yamazaki M."/>
            <person name="Ninomiya K."/>
            <person name="Ishibashi T."/>
            <person name="Yamashita H."/>
            <person name="Murakawa K."/>
            <person name="Fujimori K."/>
            <person name="Tanai H."/>
            <person name="Kimata M."/>
            <person name="Watanabe M."/>
            <person name="Hiraoka S."/>
            <person name="Chiba Y."/>
            <person name="Ishida S."/>
            <person name="Ono Y."/>
            <person name="Takiguchi S."/>
            <person name="Watanabe S."/>
            <person name="Yosida M."/>
            <person name="Hotuta T."/>
            <person name="Kusano J."/>
            <person name="Kanehori K."/>
            <person name="Takahashi-Fujii A."/>
            <person name="Hara H."/>
            <person name="Tanase T.-O."/>
            <person name="Nomura Y."/>
            <person name="Togiya S."/>
            <person name="Komai F."/>
            <person name="Hara R."/>
            <person name="Takeuchi K."/>
            <person name="Arita M."/>
            <person name="Imose N."/>
            <person name="Musashino K."/>
            <person name="Yuuki H."/>
            <person name="Oshima A."/>
            <person name="Sasaki N."/>
            <person name="Aotsuka S."/>
            <person name="Yoshikawa Y."/>
            <person name="Matsunawa H."/>
            <person name="Ichihara T."/>
            <person name="Shiohata N."/>
            <person name="Sano S."/>
            <person name="Moriya S."/>
            <person name="Momiyama H."/>
            <person name="Satoh N."/>
            <person name="Takami S."/>
            <person name="Terashima Y."/>
            <person name="Suzuki O."/>
            <person name="Nakagawa S."/>
            <person name="Senoh A."/>
            <person name="Mizoguchi H."/>
            <person name="Goto Y."/>
            <person name="Shimizu F."/>
            <person name="Wakebe H."/>
            <person name="Hishigaki H."/>
            <person name="Watanabe T."/>
            <person name="Sugiyama A."/>
            <person name="Takemoto M."/>
            <person name="Kawakami B."/>
            <person name="Yamazaki M."/>
            <person name="Watanabe K."/>
            <person name="Kumagai A."/>
            <person name="Itakura S."/>
            <person name="Fukuzumi Y."/>
            <person name="Fujimori Y."/>
            <person name="Komiyama M."/>
            <person name="Tashiro H."/>
            <person name="Tanigami A."/>
            <person name="Fujiwara T."/>
            <person name="Ono T."/>
            <person name="Yamada K."/>
            <person name="Fujii Y."/>
            <person name="Ozaki K."/>
            <person name="Hirao M."/>
            <person name="Ohmori Y."/>
            <person name="Kawabata A."/>
            <person name="Hikiji T."/>
            <person name="Kobatake N."/>
            <person name="Inagaki H."/>
            <person name="Ikema Y."/>
            <person name="Okamoto S."/>
            <person name="Okitani R."/>
            <person name="Kawakami T."/>
            <person name="Noguchi S."/>
            <person name="Itoh T."/>
            <person name="Shigeta K."/>
            <person name="Senba T."/>
            <person name="Matsumura K."/>
            <person name="Nakajima Y."/>
            <person name="Mizuno T."/>
            <person name="Morinaga M."/>
            <person name="Sasaki M."/>
            <person name="Togashi T."/>
            <person name="Oyama M."/>
            <person name="Hata H."/>
            <person name="Watanabe M."/>
            <person name="Komatsu T."/>
            <person name="Mizushima-Sugano J."/>
            <person name="Satoh T."/>
            <person name="Shirai Y."/>
            <person name="Takahashi Y."/>
            <person name="Nakagawa K."/>
            <person name="Okumura K."/>
            <person name="Nagase T."/>
            <person name="Nomura N."/>
            <person name="Kikuchi H."/>
            <person name="Masuho Y."/>
            <person name="Yamashita R."/>
            <person name="Nakai K."/>
            <person name="Yada T."/>
            <person name="Nakamura Y."/>
            <person name="Ohara O."/>
            <person name="Isogai T."/>
            <person name="Sugano S."/>
        </authorList>
    </citation>
    <scope>NUCLEOTIDE SEQUENCE [LARGE SCALE MRNA]</scope>
    <source>
        <tissue>Small intestine</tissue>
    </source>
</reference>
<reference key="3">
    <citation type="journal article" date="2004" name="Genome Res.">
        <title>The status, quality, and expansion of the NIH full-length cDNA project: the Mammalian Gene Collection (MGC).</title>
        <authorList>
            <consortium name="The MGC Project Team"/>
        </authorList>
    </citation>
    <scope>NUCLEOTIDE SEQUENCE [LARGE SCALE MRNA]</scope>
    <source>
        <tissue>Cervix</tissue>
        <tissue>Placenta</tissue>
        <tissue>Testis</tissue>
    </source>
</reference>
<reference key="4">
    <citation type="journal article" date="2006" name="Cell">
        <title>Global, in vivo, and site-specific phosphorylation dynamics in signaling networks.</title>
        <authorList>
            <person name="Olsen J.V."/>
            <person name="Blagoev B."/>
            <person name="Gnad F."/>
            <person name="Macek B."/>
            <person name="Kumar C."/>
            <person name="Mortensen P."/>
            <person name="Mann M."/>
        </authorList>
    </citation>
    <scope>PHOSPHORYLATION [LARGE SCALE ANALYSIS] AT SER-149</scope>
    <scope>IDENTIFICATION BY MASS SPECTROMETRY [LARGE SCALE ANALYSIS]</scope>
    <source>
        <tissue>Cervix carcinoma</tissue>
    </source>
</reference>
<reference key="5">
    <citation type="journal article" date="2007" name="Science">
        <title>ATM and ATR substrate analysis reveals extensive protein networks responsive to DNA damage.</title>
        <authorList>
            <person name="Matsuoka S."/>
            <person name="Ballif B.A."/>
            <person name="Smogorzewska A."/>
            <person name="McDonald E.R. III"/>
            <person name="Hurov K.E."/>
            <person name="Luo J."/>
            <person name="Bakalarski C.E."/>
            <person name="Zhao Z."/>
            <person name="Solimini N."/>
            <person name="Lerenthal Y."/>
            <person name="Shiloh Y."/>
            <person name="Gygi S.P."/>
            <person name="Elledge S.J."/>
        </authorList>
    </citation>
    <scope>IDENTIFICATION BY MASS SPECTROMETRY [LARGE SCALE ANALYSIS]</scope>
    <source>
        <tissue>Embryonic kidney</tissue>
    </source>
</reference>
<reference key="6">
    <citation type="journal article" date="2008" name="Proc. Natl. Acad. Sci. U.S.A.">
        <title>A quantitative atlas of mitotic phosphorylation.</title>
        <authorList>
            <person name="Dephoure N."/>
            <person name="Zhou C."/>
            <person name="Villen J."/>
            <person name="Beausoleil S.A."/>
            <person name="Bakalarski C.E."/>
            <person name="Elledge S.J."/>
            <person name="Gygi S.P."/>
        </authorList>
    </citation>
    <scope>IDENTIFICATION BY MASS SPECTROMETRY [LARGE SCALE ANALYSIS]</scope>
    <source>
        <tissue>Cervix carcinoma</tissue>
    </source>
</reference>
<reference key="7">
    <citation type="journal article" date="2009" name="Anal. Chem.">
        <title>Lys-N and trypsin cover complementary parts of the phosphoproteome in a refined SCX-based approach.</title>
        <authorList>
            <person name="Gauci S."/>
            <person name="Helbig A.O."/>
            <person name="Slijper M."/>
            <person name="Krijgsveld J."/>
            <person name="Heck A.J."/>
            <person name="Mohammed S."/>
        </authorList>
    </citation>
    <scope>IDENTIFICATION BY MASS SPECTROMETRY [LARGE SCALE ANALYSIS]</scope>
</reference>
<reference key="8">
    <citation type="journal article" date="2009" name="Immunity">
        <title>NKAP is a transcriptional repressor of notch signaling and is required for T cell development.</title>
        <authorList>
            <person name="Pajerowski A.G."/>
            <person name="Nguyen C."/>
            <person name="Aghajanian H."/>
            <person name="Shapiro M.J."/>
            <person name="Shapiro V.S."/>
        </authorList>
    </citation>
    <scope>FUNCTION</scope>
    <scope>INTERACTION WITH CIR1 AND HDAC3</scope>
</reference>
<reference key="9">
    <citation type="journal article" date="2009" name="Sci. Signal.">
        <title>Quantitative phosphoproteomic analysis of T cell receptor signaling reveals system-wide modulation of protein-protein interactions.</title>
        <authorList>
            <person name="Mayya V."/>
            <person name="Lundgren D.H."/>
            <person name="Hwang S.-I."/>
            <person name="Rezaul K."/>
            <person name="Wu L."/>
            <person name="Eng J.K."/>
            <person name="Rodionov V."/>
            <person name="Han D.K."/>
        </authorList>
    </citation>
    <scope>PHOSPHORYLATION [LARGE SCALE ANALYSIS] AT SER-149</scope>
    <scope>IDENTIFICATION BY MASS SPECTROMETRY [LARGE SCALE ANALYSIS]</scope>
    <source>
        <tissue>Leukemic T-cell</tissue>
    </source>
</reference>
<reference key="10">
    <citation type="journal article" date="2009" name="Science">
        <title>Lysine acetylation targets protein complexes and co-regulates major cellular functions.</title>
        <authorList>
            <person name="Choudhary C."/>
            <person name="Kumar C."/>
            <person name="Gnad F."/>
            <person name="Nielsen M.L."/>
            <person name="Rehman M."/>
            <person name="Walther T.C."/>
            <person name="Olsen J.V."/>
            <person name="Mann M."/>
        </authorList>
    </citation>
    <scope>ACETYLATION [LARGE SCALE ANALYSIS] AT LYS-112</scope>
    <scope>IDENTIFICATION BY MASS SPECTROMETRY [LARGE SCALE ANALYSIS]</scope>
</reference>
<reference key="11">
    <citation type="journal article" date="2010" name="Sci. Signal.">
        <title>Quantitative phosphoproteomics reveals widespread full phosphorylation site occupancy during mitosis.</title>
        <authorList>
            <person name="Olsen J.V."/>
            <person name="Vermeulen M."/>
            <person name="Santamaria A."/>
            <person name="Kumar C."/>
            <person name="Miller M.L."/>
            <person name="Jensen L.J."/>
            <person name="Gnad F."/>
            <person name="Cox J."/>
            <person name="Jensen T.S."/>
            <person name="Nigg E.A."/>
            <person name="Brunak S."/>
            <person name="Mann M."/>
        </authorList>
    </citation>
    <scope>PHOSPHORYLATION [LARGE SCALE ANALYSIS] AT SER-149</scope>
    <scope>IDENTIFICATION BY MASS SPECTROMETRY [LARGE SCALE ANALYSIS]</scope>
    <source>
        <tissue>Cervix carcinoma</tissue>
    </source>
</reference>
<reference key="12">
    <citation type="journal article" date="2011" name="Sci. Signal.">
        <title>System-wide temporal characterization of the proteome and phosphoproteome of human embryonic stem cell differentiation.</title>
        <authorList>
            <person name="Rigbolt K.T."/>
            <person name="Prokhorova T.A."/>
            <person name="Akimov V."/>
            <person name="Henningsen J."/>
            <person name="Johansen P.T."/>
            <person name="Kratchmarova I."/>
            <person name="Kassem M."/>
            <person name="Mann M."/>
            <person name="Olsen J.V."/>
            <person name="Blagoev B."/>
        </authorList>
    </citation>
    <scope>PHOSPHORYLATION [LARGE SCALE ANALYSIS] AT SER-149</scope>
    <scope>IDENTIFICATION BY MASS SPECTROMETRY [LARGE SCALE ANALYSIS]</scope>
</reference>
<reference key="13">
    <citation type="journal article" date="2013" name="J. Proteome Res.">
        <title>Toward a comprehensive characterization of a human cancer cell phosphoproteome.</title>
        <authorList>
            <person name="Zhou H."/>
            <person name="Di Palma S."/>
            <person name="Preisinger C."/>
            <person name="Peng M."/>
            <person name="Polat A.N."/>
            <person name="Heck A.J."/>
            <person name="Mohammed S."/>
        </authorList>
    </citation>
    <scope>PHOSPHORYLATION [LARGE SCALE ANALYSIS] AT SER-7; SER-9; SER-50; SER-64; SER-149; SER-157 AND THR-161</scope>
    <scope>IDENTIFICATION BY MASS SPECTROMETRY [LARGE SCALE ANALYSIS]</scope>
    <source>
        <tissue>Cervix carcinoma</tissue>
        <tissue>Erythroleukemia</tissue>
    </source>
</reference>
<reference key="14">
    <citation type="journal article" date="2017" name="Nat. Struct. Mol. Biol.">
        <title>Site-specific mapping of the human SUMO proteome reveals co-modification with phosphorylation.</title>
        <authorList>
            <person name="Hendriks I.A."/>
            <person name="Lyon D."/>
            <person name="Young C."/>
            <person name="Jensen L.J."/>
            <person name="Vertegaal A.C."/>
            <person name="Nielsen M.L."/>
        </authorList>
    </citation>
    <scope>SUMOYLATION [LARGE SCALE ANALYSIS] AT LYS-283 AND LYS-305</scope>
    <scope>IDENTIFICATION BY MASS SPECTROMETRY [LARGE SCALE ANALYSIS]</scope>
</reference>
<reference key="15">
    <citation type="journal article" date="2016" name="Am. J. Med. Genet. A">
        <title>Tentative clinical diagnosis of Lujan-Fryns syndrome--A conglomeration of different genetic entities?</title>
        <authorList>
            <person name="Hackmann K."/>
            <person name="Rump A."/>
            <person name="Haas S.A."/>
            <person name="Lemke J.R."/>
            <person name="Fryns J.P."/>
            <person name="Tzschach A."/>
            <person name="Wieczorek D."/>
            <person name="Albrecht B."/>
            <person name="Kuechler A."/>
            <person name="Ripperger T."/>
            <person name="Kobelt A."/>
            <person name="Oexle K."/>
            <person name="Tinschert S."/>
            <person name="Schrock E."/>
            <person name="Kalscheuer V.M."/>
            <person name="Di Donato N."/>
        </authorList>
    </citation>
    <scope>INVOLVEMENT IN MRXSHD</scope>
    <scope>VARIANT MRXSHD GLN-333</scope>
</reference>
<reference key="16">
    <citation type="journal article" date="2019" name="Am. J. Hum. Genet.">
        <title>Missense mutations in NKAP cause a disorder of transcriptional regulation characterized by Marfanoid habitus and cognitive impairment.</title>
        <authorList>
            <person name="Fiordaliso S.K."/>
            <person name="Iwata-Otsubo A."/>
            <person name="Ritter A.L."/>
            <person name="Quesnel-Vallieres M."/>
            <person name="Fujiki K."/>
            <person name="Nishi E."/>
            <person name="Hancarova M."/>
            <person name="Miyake N."/>
            <person name="Morton J.E.V."/>
            <person name="Lee S."/>
            <person name="Hackmann K."/>
            <person name="Bando M."/>
            <person name="Masuda K."/>
            <person name="Nakato R."/>
            <person name="Arakawa M."/>
            <person name="Bhoj E."/>
            <person name="Li D."/>
            <person name="Hakonarson H."/>
            <person name="Takeda R."/>
            <person name="Harr M."/>
            <person name="Keena B."/>
            <person name="Zackai E.H."/>
            <person name="Okamoto N."/>
            <person name="Mizuno S."/>
            <person name="Ko J.M."/>
            <person name="Valachova A."/>
            <person name="Prchalova D."/>
            <person name="Vlckova M."/>
            <person name="Pippucci T."/>
            <person name="Seiler C."/>
            <person name="Choi M."/>
            <person name="Matsumoto N."/>
            <person name="Di Donato N."/>
            <person name="Barash Y."/>
            <person name="Sedlacek Z."/>
            <person name="Shirahige K."/>
            <person name="Izumi K."/>
        </authorList>
    </citation>
    <scope>INVOLVEMENT IN MRXSHD</scope>
    <scope>VARIANTS MRXSHD CYS-330; HIS-330; GLN-333; THR-337 AND GLN-361</scope>
    <scope>FUNCTION</scope>
</reference>
<proteinExistence type="evidence at protein level"/>
<accession>Q8N5F7</accession>
<accession>Q6IPW6</accession>
<accession>Q96BQ2</accession>
<accession>Q9H638</accession>
<evidence type="ECO:0000256" key="1">
    <source>
        <dbReference type="SAM" id="MobiDB-lite"/>
    </source>
</evidence>
<evidence type="ECO:0000269" key="2">
    <source>
    </source>
</evidence>
<evidence type="ECO:0000269" key="3">
    <source>
    </source>
</evidence>
<evidence type="ECO:0000269" key="4">
    <source>
    </source>
</evidence>
<evidence type="ECO:0000269" key="5">
    <source>
    </source>
</evidence>
<evidence type="ECO:0000305" key="6"/>
<evidence type="ECO:0007744" key="7">
    <source>
    </source>
</evidence>
<evidence type="ECO:0007744" key="8">
    <source>
    </source>
</evidence>
<evidence type="ECO:0007744" key="9">
    <source>
    </source>
</evidence>
<evidence type="ECO:0007744" key="10">
    <source>
    </source>
</evidence>
<evidence type="ECO:0007744" key="11">
    <source>
    </source>
</evidence>
<evidence type="ECO:0007744" key="12">
    <source>
    </source>
</evidence>
<evidence type="ECO:0007744" key="13">
    <source>
    </source>
</evidence>
<feature type="chain" id="PRO_0000259645" description="NF-kappa-B-activating protein">
    <location>
        <begin position="1"/>
        <end position="415"/>
    </location>
</feature>
<feature type="region of interest" description="Disordered" evidence="1">
    <location>
        <begin position="1"/>
        <end position="311"/>
    </location>
</feature>
<feature type="region of interest" description="Necessary for interaction with CIR1" evidence="3">
    <location>
        <begin position="179"/>
        <end position="272"/>
    </location>
</feature>
<feature type="region of interest" description="Necessary for interaction with HDAC3 and transcriptional repression" evidence="3">
    <location>
        <begin position="273"/>
        <end position="415"/>
    </location>
</feature>
<feature type="compositionally biased region" description="Low complexity" evidence="1">
    <location>
        <begin position="25"/>
        <end position="34"/>
    </location>
</feature>
<feature type="compositionally biased region" description="Basic residues" evidence="1">
    <location>
        <begin position="35"/>
        <end position="46"/>
    </location>
</feature>
<feature type="compositionally biased region" description="Low complexity" evidence="1">
    <location>
        <begin position="93"/>
        <end position="110"/>
    </location>
</feature>
<feature type="compositionally biased region" description="Basic and acidic residues" evidence="1">
    <location>
        <begin position="118"/>
        <end position="138"/>
    </location>
</feature>
<feature type="compositionally biased region" description="Basic and acidic residues" evidence="1">
    <location>
        <begin position="158"/>
        <end position="170"/>
    </location>
</feature>
<feature type="compositionally biased region" description="Basic residues" evidence="1">
    <location>
        <begin position="184"/>
        <end position="208"/>
    </location>
</feature>
<feature type="compositionally biased region" description="Acidic residues" evidence="1">
    <location>
        <begin position="212"/>
        <end position="225"/>
    </location>
</feature>
<feature type="compositionally biased region" description="Basic residues" evidence="1">
    <location>
        <begin position="230"/>
        <end position="258"/>
    </location>
</feature>
<feature type="compositionally biased region" description="Basic and acidic residues" evidence="1">
    <location>
        <begin position="259"/>
        <end position="270"/>
    </location>
</feature>
<feature type="compositionally biased region" description="Basic and acidic residues" evidence="1">
    <location>
        <begin position="277"/>
        <end position="286"/>
    </location>
</feature>
<feature type="modified residue" description="Phosphoserine" evidence="12">
    <location>
        <position position="7"/>
    </location>
</feature>
<feature type="modified residue" description="Phosphoserine" evidence="12">
    <location>
        <position position="9"/>
    </location>
</feature>
<feature type="modified residue" description="Phosphoserine" evidence="12">
    <location>
        <position position="50"/>
    </location>
</feature>
<feature type="modified residue" description="Phosphoserine" evidence="12">
    <location>
        <position position="64"/>
    </location>
</feature>
<feature type="modified residue" description="N6-acetyllysine" evidence="8">
    <location>
        <position position="112"/>
    </location>
</feature>
<feature type="modified residue" description="Phosphoserine" evidence="7 9 10 11 12">
    <location>
        <position position="149"/>
    </location>
</feature>
<feature type="modified residue" description="Phosphoserine" evidence="12">
    <location>
        <position position="157"/>
    </location>
</feature>
<feature type="modified residue" description="Phosphothreonine" evidence="12">
    <location>
        <position position="161"/>
    </location>
</feature>
<feature type="cross-link" description="Glycyl lysine isopeptide (Lys-Gly) (interchain with G-Cter in SUMO2)" evidence="13">
    <location>
        <position position="283"/>
    </location>
</feature>
<feature type="cross-link" description="Glycyl lysine isopeptide (Lys-Gly) (interchain with G-Cter in SUMO2)" evidence="13">
    <location>
        <position position="305"/>
    </location>
</feature>
<feature type="sequence variant" id="VAR_053799" description="In dbSNP:rs34728541.">
    <original>P</original>
    <variation>H</variation>
    <location>
        <position position="115"/>
    </location>
</feature>
<feature type="sequence variant" id="VAR_083895" description="In MRXSHD; dbSNP:rs1603379781." evidence="5">
    <original>R</original>
    <variation>C</variation>
    <location>
        <position position="330"/>
    </location>
</feature>
<feature type="sequence variant" id="VAR_083896" description="In MRXSHD; dbSNP:rs1603379780." evidence="5">
    <original>R</original>
    <variation>H</variation>
    <location>
        <position position="330"/>
    </location>
</feature>
<feature type="sequence variant" id="VAR_083897" description="In MRXSHD; uncertain significance; dbSNP:rs1603379779." evidence="4 5">
    <original>R</original>
    <variation>Q</variation>
    <location>
        <position position="333"/>
    </location>
</feature>
<feature type="sequence variant" id="VAR_083898" description="In MRXSHD; dbSNP:rs1603379772." evidence="5">
    <original>I</original>
    <variation>T</variation>
    <location>
        <position position="337"/>
    </location>
</feature>
<feature type="sequence variant" id="VAR_083899" description="In MRXSHD; uncertain significance; dbSNP:rs1603379318." evidence="5">
    <original>R</original>
    <variation>Q</variation>
    <location>
        <position position="361"/>
    </location>
</feature>
<feature type="sequence conflict" description="In Ref. 2; BAB15428." evidence="6" ref="2">
    <original>T</original>
    <variation>A</variation>
    <location>
        <position position="57"/>
    </location>
</feature>
<feature type="sequence conflict" description="In Ref. 3; AAH15354." evidence="6" ref="3">
    <original>D</original>
    <variation>Y</variation>
    <location>
        <position position="280"/>
    </location>
</feature>
<comment type="function">
    <text evidence="2 3 5">Acts as a transcriptional repressor (PubMed:14550261, PubMed:19409814, PubMed:31587868). Plays a role as a transcriptional corepressor of the Notch-mediated signaling required for T-cell development (PubMed:19409814). Also involved in the TNF and IL-1 induced NF-kappa-B activation. Associates with chromatin at the Notch-regulated SKP2 promoter.</text>
</comment>
<comment type="subunit">
    <text evidence="3">Component of the Notch corepressor complex. Interacts with CIR1 and HDAC3.</text>
</comment>
<comment type="interaction">
    <interactant intactId="EBI-721539">
        <id>Q8N5F7</id>
    </interactant>
    <interactant intactId="EBI-541426">
        <id>Q9BXS5</id>
        <label>AP1M1</label>
    </interactant>
    <organismsDiffer>false</organismsDiffer>
    <experiments>3</experiments>
</comment>
<comment type="interaction">
    <interactant intactId="EBI-721539">
        <id>Q8N5F7</id>
    </interactant>
    <interactant intactId="EBI-1046350">
        <id>Q9UJV9</id>
        <label>DDX41</label>
    </interactant>
    <organismsDiffer>false</organismsDiffer>
    <experiments>5</experiments>
</comment>
<comment type="interaction">
    <interactant intactId="EBI-721539">
        <id>Q8N5F7</id>
    </interactant>
    <interactant intactId="EBI-2511477">
        <id>Q14562</id>
        <label>DHX8</label>
    </interactant>
    <organismsDiffer>false</organismsDiffer>
    <experiments>3</experiments>
</comment>
<comment type="interaction">
    <interactant intactId="EBI-721539">
        <id>Q8N5F7</id>
    </interactant>
    <interactant intactId="EBI-780467">
        <id>O75052</id>
        <label>NOS1AP</label>
    </interactant>
    <organismsDiffer>false</organismsDiffer>
    <experiments>5</experiments>
</comment>
<comment type="interaction">
    <interactant intactId="EBI-721539">
        <id>Q8N5F7</id>
    </interactant>
    <interactant intactId="EBI-744322">
        <id>O43395</id>
        <label>PRPF3</label>
    </interactant>
    <organismsDiffer>false</organismsDiffer>
    <experiments>2</experiments>
</comment>
<comment type="interaction">
    <interactant intactId="EBI-721539">
        <id>Q8N5F7</id>
    </interactant>
    <interactant intactId="EBI-473291">
        <id>O75400</id>
        <label>PRPF40A</label>
    </interactant>
    <organismsDiffer>false</organismsDiffer>
    <experiments>2</experiments>
</comment>
<comment type="interaction">
    <interactant intactId="EBI-721539">
        <id>Q8N5F7</id>
    </interactant>
    <interactant intactId="EBI-7704044">
        <id>Q9Y388</id>
        <label>RBMX2</label>
    </interactant>
    <organismsDiffer>false</organismsDiffer>
    <experiments>2</experiments>
</comment>
<comment type="interaction">
    <interactant intactId="EBI-721539">
        <id>Q8N5F7</id>
    </interactant>
    <interactant intactId="EBI-632461">
        <id>Q01081</id>
        <label>U2AF1</label>
    </interactant>
    <organismsDiffer>false</organismsDiffer>
    <experiments>2</experiments>
</comment>
<comment type="subcellular location">
    <subcellularLocation>
        <location evidence="2">Nucleus</location>
    </subcellularLocation>
</comment>
<comment type="disease" evidence="4 5">
    <disease id="DI-05781">
        <name>Intellectual developmental disorder, X-linked, syndromic, Hackman-Di Donato type</name>
        <acronym>MRXSHD</acronym>
        <description>An X-linked recessive disorder characterized by impaired intellectual development, global developmental delay, hypotonia, joint contractures, behavioral abnormalities, Marfanoid habitus, scoliosis, and mildly dysmorphic facies.</description>
        <dbReference type="MIM" id="301039"/>
    </disease>
    <text>The disease is caused by variants affecting the gene represented in this entry.</text>
</comment>
<comment type="similarity">
    <text evidence="6">Belongs to the NKAP family.</text>
</comment>
<comment type="sequence caution" evidence="6">
    <conflict type="miscellaneous discrepancy">
        <sequence resource="EMBL-CDS" id="AAH71686"/>
    </conflict>
    <text>Contaminating sequence. Potential poly-A sequence.</text>
</comment>
<organism>
    <name type="scientific">Homo sapiens</name>
    <name type="common">Human</name>
    <dbReference type="NCBI Taxonomy" id="9606"/>
    <lineage>
        <taxon>Eukaryota</taxon>
        <taxon>Metazoa</taxon>
        <taxon>Chordata</taxon>
        <taxon>Craniata</taxon>
        <taxon>Vertebrata</taxon>
        <taxon>Euteleostomi</taxon>
        <taxon>Mammalia</taxon>
        <taxon>Eutheria</taxon>
        <taxon>Euarchontoglires</taxon>
        <taxon>Primates</taxon>
        <taxon>Haplorrhini</taxon>
        <taxon>Catarrhini</taxon>
        <taxon>Hominidae</taxon>
        <taxon>Homo</taxon>
    </lineage>
</organism>
<dbReference type="EMBL" id="AY388958">
    <property type="protein sequence ID" value="AAQ90402.1"/>
    <property type="molecule type" value="mRNA"/>
</dbReference>
<dbReference type="EMBL" id="AK026279">
    <property type="protein sequence ID" value="BAB15428.1"/>
    <property type="molecule type" value="mRNA"/>
</dbReference>
<dbReference type="EMBL" id="BC015354">
    <property type="protein sequence ID" value="AAH15354.1"/>
    <property type="molecule type" value="mRNA"/>
</dbReference>
<dbReference type="EMBL" id="BC032442">
    <property type="protein sequence ID" value="AAH32442.1"/>
    <property type="molecule type" value="mRNA"/>
</dbReference>
<dbReference type="EMBL" id="BC071686">
    <property type="protein sequence ID" value="AAH71686.1"/>
    <property type="status" value="ALT_SEQ"/>
    <property type="molecule type" value="mRNA"/>
</dbReference>
<dbReference type="CCDS" id="CCDS14592.1"/>
<dbReference type="RefSeq" id="NP_078804.2">
    <property type="nucleotide sequence ID" value="NM_024528.4"/>
</dbReference>
<dbReference type="PDB" id="6QDV">
    <property type="method" value="EM"/>
    <property type="resolution" value="3.30 A"/>
    <property type="chains" value="Z=329-358"/>
</dbReference>
<dbReference type="PDB" id="7W5B">
    <property type="method" value="EM"/>
    <property type="resolution" value="4.30 A"/>
    <property type="chains" value="3=1-415"/>
</dbReference>
<dbReference type="PDB" id="8C6J">
    <property type="method" value="EM"/>
    <property type="resolution" value="2.80 A"/>
    <property type="chains" value="Z=1-415"/>
</dbReference>
<dbReference type="PDB" id="9FMD">
    <property type="method" value="EM"/>
    <property type="resolution" value="3.30 A"/>
    <property type="chains" value="z=1-415"/>
</dbReference>
<dbReference type="PDBsum" id="6QDV"/>
<dbReference type="PDBsum" id="7W5B"/>
<dbReference type="PDBsum" id="8C6J"/>
<dbReference type="PDBsum" id="9FMD"/>
<dbReference type="EMDB" id="EMD-16452"/>
<dbReference type="EMDB" id="EMD-32321"/>
<dbReference type="EMDB" id="EMD-4525"/>
<dbReference type="SMR" id="Q8N5F7"/>
<dbReference type="BioGRID" id="122723">
    <property type="interactions" value="145"/>
</dbReference>
<dbReference type="FunCoup" id="Q8N5F7">
    <property type="interactions" value="3609"/>
</dbReference>
<dbReference type="IntAct" id="Q8N5F7">
    <property type="interactions" value="102"/>
</dbReference>
<dbReference type="MINT" id="Q8N5F7"/>
<dbReference type="STRING" id="9606.ENSP00000360464"/>
<dbReference type="GlyGen" id="Q8N5F7">
    <property type="glycosylation" value="1 site, 1 O-linked glycan (1 site)"/>
</dbReference>
<dbReference type="iPTMnet" id="Q8N5F7"/>
<dbReference type="PhosphoSitePlus" id="Q8N5F7"/>
<dbReference type="BioMuta" id="NKAP"/>
<dbReference type="DMDM" id="74728990"/>
<dbReference type="jPOST" id="Q8N5F7"/>
<dbReference type="MassIVE" id="Q8N5F7"/>
<dbReference type="PaxDb" id="9606-ENSP00000360464"/>
<dbReference type="PeptideAtlas" id="Q8N5F7"/>
<dbReference type="ProteomicsDB" id="72046"/>
<dbReference type="Pumba" id="Q8N5F7"/>
<dbReference type="Antibodypedia" id="364">
    <property type="antibodies" value="132 antibodies from 25 providers"/>
</dbReference>
<dbReference type="DNASU" id="79576"/>
<dbReference type="Ensembl" id="ENST00000371410.5">
    <property type="protein sequence ID" value="ENSP00000360464.3"/>
    <property type="gene ID" value="ENSG00000101882.10"/>
</dbReference>
<dbReference type="GeneID" id="79576"/>
<dbReference type="KEGG" id="hsa:79576"/>
<dbReference type="MANE-Select" id="ENST00000371410.5">
    <property type="protein sequence ID" value="ENSP00000360464.3"/>
    <property type="RefSeq nucleotide sequence ID" value="NM_024528.4"/>
    <property type="RefSeq protein sequence ID" value="NP_078804.2"/>
</dbReference>
<dbReference type="UCSC" id="uc004esh.4">
    <property type="organism name" value="human"/>
</dbReference>
<dbReference type="AGR" id="HGNC:29873"/>
<dbReference type="CTD" id="79576"/>
<dbReference type="DisGeNET" id="79576"/>
<dbReference type="GeneCards" id="NKAP"/>
<dbReference type="HGNC" id="HGNC:29873">
    <property type="gene designation" value="NKAP"/>
</dbReference>
<dbReference type="HPA" id="ENSG00000101882">
    <property type="expression patterns" value="Low tissue specificity"/>
</dbReference>
<dbReference type="MalaCards" id="NKAP"/>
<dbReference type="MIM" id="300766">
    <property type="type" value="gene"/>
</dbReference>
<dbReference type="MIM" id="301039">
    <property type="type" value="phenotype"/>
</dbReference>
<dbReference type="neXtProt" id="NX_Q8N5F7"/>
<dbReference type="OpenTargets" id="ENSG00000101882"/>
<dbReference type="PharmGKB" id="PA162397584"/>
<dbReference type="VEuPathDB" id="HostDB:ENSG00000101882"/>
<dbReference type="eggNOG" id="KOG2812">
    <property type="taxonomic scope" value="Eukaryota"/>
</dbReference>
<dbReference type="GeneTree" id="ENSGT00940000160787"/>
<dbReference type="HOGENOM" id="CLU_032439_1_0_1"/>
<dbReference type="InParanoid" id="Q8N5F7"/>
<dbReference type="OMA" id="WRQQENM"/>
<dbReference type="OrthoDB" id="273141at2759"/>
<dbReference type="PAN-GO" id="Q8N5F7">
    <property type="GO annotations" value="3 GO annotations based on evolutionary models"/>
</dbReference>
<dbReference type="PhylomeDB" id="Q8N5F7"/>
<dbReference type="TreeFam" id="TF315333"/>
<dbReference type="PathwayCommons" id="Q8N5F7"/>
<dbReference type="Reactome" id="R-HSA-72163">
    <property type="pathway name" value="mRNA Splicing - Major Pathway"/>
</dbReference>
<dbReference type="SignaLink" id="Q8N5F7"/>
<dbReference type="BioGRID-ORCS" id="79576">
    <property type="hits" value="382 hits in 783 CRISPR screens"/>
</dbReference>
<dbReference type="CD-CODE" id="804901D1">
    <property type="entry name" value="Nuclear speckle"/>
</dbReference>
<dbReference type="ChiTaRS" id="NKAP">
    <property type="organism name" value="human"/>
</dbReference>
<dbReference type="GeneWiki" id="NKAP"/>
<dbReference type="GenomeRNAi" id="79576"/>
<dbReference type="Pharos" id="Q8N5F7">
    <property type="development level" value="Tbio"/>
</dbReference>
<dbReference type="PRO" id="PR:Q8N5F7"/>
<dbReference type="Proteomes" id="UP000005640">
    <property type="component" value="Chromosome X"/>
</dbReference>
<dbReference type="RNAct" id="Q8N5F7">
    <property type="molecule type" value="protein"/>
</dbReference>
<dbReference type="Bgee" id="ENSG00000101882">
    <property type="expression patterns" value="Expressed in calcaneal tendon and 173 other cell types or tissues"/>
</dbReference>
<dbReference type="ExpressionAtlas" id="Q8N5F7">
    <property type="expression patterns" value="baseline and differential"/>
</dbReference>
<dbReference type="GO" id="GO:0005829">
    <property type="term" value="C:cytosol"/>
    <property type="evidence" value="ECO:0000314"/>
    <property type="project" value="HPA"/>
</dbReference>
<dbReference type="GO" id="GO:0005654">
    <property type="term" value="C:nucleoplasm"/>
    <property type="evidence" value="ECO:0000314"/>
    <property type="project" value="HPA"/>
</dbReference>
<dbReference type="GO" id="GO:0005634">
    <property type="term" value="C:nucleus"/>
    <property type="evidence" value="ECO:0000318"/>
    <property type="project" value="GO_Central"/>
</dbReference>
<dbReference type="GO" id="GO:0003682">
    <property type="term" value="F:chromatin binding"/>
    <property type="evidence" value="ECO:0000314"/>
    <property type="project" value="UniProtKB"/>
</dbReference>
<dbReference type="GO" id="GO:0031490">
    <property type="term" value="F:chromatin DNA binding"/>
    <property type="evidence" value="ECO:0007669"/>
    <property type="project" value="Ensembl"/>
</dbReference>
<dbReference type="GO" id="GO:0003723">
    <property type="term" value="F:RNA binding"/>
    <property type="evidence" value="ECO:0007005"/>
    <property type="project" value="UniProtKB"/>
</dbReference>
<dbReference type="GO" id="GO:0030851">
    <property type="term" value="P:granulocyte differentiation"/>
    <property type="evidence" value="ECO:0007669"/>
    <property type="project" value="Ensembl"/>
</dbReference>
<dbReference type="GO" id="GO:0071425">
    <property type="term" value="P:hematopoietic stem cell proliferation"/>
    <property type="evidence" value="ECO:0007669"/>
    <property type="project" value="Ensembl"/>
</dbReference>
<dbReference type="GO" id="GO:0045892">
    <property type="term" value="P:negative regulation of DNA-templated transcription"/>
    <property type="evidence" value="ECO:0000314"/>
    <property type="project" value="UniProtKB"/>
</dbReference>
<dbReference type="GO" id="GO:0000122">
    <property type="term" value="P:negative regulation of transcription by RNA polymerase II"/>
    <property type="evidence" value="ECO:0000315"/>
    <property type="project" value="UniProtKB"/>
</dbReference>
<dbReference type="GO" id="GO:0007219">
    <property type="term" value="P:Notch signaling pathway"/>
    <property type="evidence" value="ECO:0007669"/>
    <property type="project" value="UniProtKB-KW"/>
</dbReference>
<dbReference type="GO" id="GO:0046638">
    <property type="term" value="P:positive regulation of alpha-beta T cell differentiation"/>
    <property type="evidence" value="ECO:0000315"/>
    <property type="project" value="UniProtKB"/>
</dbReference>
<dbReference type="GO" id="GO:0035019">
    <property type="term" value="P:somatic stem cell population maintenance"/>
    <property type="evidence" value="ECO:0007669"/>
    <property type="project" value="Ensembl"/>
</dbReference>
<dbReference type="GO" id="GO:0033077">
    <property type="term" value="P:T cell differentiation in thymus"/>
    <property type="evidence" value="ECO:0007669"/>
    <property type="project" value="Ensembl"/>
</dbReference>
<dbReference type="InterPro" id="IPR040466">
    <property type="entry name" value="NKAP"/>
</dbReference>
<dbReference type="InterPro" id="IPR009269">
    <property type="entry name" value="NKAP_C"/>
</dbReference>
<dbReference type="PANTHER" id="PTHR13087">
    <property type="entry name" value="NF-KAPPA B ACTIVATING PROTEIN"/>
    <property type="match status" value="1"/>
</dbReference>
<dbReference type="PANTHER" id="PTHR13087:SF2">
    <property type="entry name" value="NF-KAPPA-B-ACTIVATING PROTEIN"/>
    <property type="match status" value="1"/>
</dbReference>
<dbReference type="Pfam" id="PF15692">
    <property type="entry name" value="NKAP"/>
    <property type="match status" value="1"/>
</dbReference>
<dbReference type="Pfam" id="PF06047">
    <property type="entry name" value="Nkap_C"/>
    <property type="match status" value="1"/>
</dbReference>
<keyword id="KW-0002">3D-structure</keyword>
<keyword id="KW-0007">Acetylation</keyword>
<keyword id="KW-0225">Disease variant</keyword>
<keyword id="KW-0991">Intellectual disability</keyword>
<keyword id="KW-1017">Isopeptide bond</keyword>
<keyword id="KW-0914">Notch signaling pathway</keyword>
<keyword id="KW-0539">Nucleus</keyword>
<keyword id="KW-0597">Phosphoprotein</keyword>
<keyword id="KW-1267">Proteomics identification</keyword>
<keyword id="KW-1185">Reference proteome</keyword>
<keyword id="KW-0678">Repressor</keyword>
<keyword id="KW-0804">Transcription</keyword>
<keyword id="KW-0805">Transcription regulation</keyword>
<keyword id="KW-0832">Ubl conjugation</keyword>
<gene>
    <name type="primary">NKAP</name>
</gene>
<name>NKAP_HUMAN</name>
<protein>
    <recommendedName>
        <fullName>NF-kappa-B-activating protein</fullName>
    </recommendedName>
</protein>